<feature type="chain" id="PRO_0000165997" description="Uricase">
    <location>
        <begin position="1"/>
        <end position="303"/>
    </location>
</feature>
<feature type="short sequence motif" description="Microbody targeting signal" evidence="3">
    <location>
        <begin position="301"/>
        <end position="303"/>
    </location>
</feature>
<feature type="active site" description="Charge relay system" evidence="1">
    <location>
        <position position="12"/>
    </location>
</feature>
<feature type="active site" description="Charge relay system" evidence="1">
    <location>
        <position position="60"/>
    </location>
</feature>
<feature type="active site" description="Charge relay system" evidence="1">
    <location>
        <position position="263"/>
    </location>
</feature>
<feature type="binding site" evidence="2">
    <location>
        <position position="60"/>
    </location>
    <ligand>
        <name>urate</name>
        <dbReference type="ChEBI" id="CHEBI:17775"/>
    </ligand>
</feature>
<feature type="binding site" evidence="2">
    <location>
        <position position="61"/>
    </location>
    <ligand>
        <name>urate</name>
        <dbReference type="ChEBI" id="CHEBI:17775"/>
    </ligand>
</feature>
<feature type="binding site" evidence="2">
    <location>
        <position position="162"/>
    </location>
    <ligand>
        <name>urate</name>
        <dbReference type="ChEBI" id="CHEBI:17775"/>
    </ligand>
</feature>
<feature type="binding site" evidence="2">
    <location>
        <position position="179"/>
    </location>
    <ligand>
        <name>urate</name>
        <dbReference type="ChEBI" id="CHEBI:17775"/>
    </ligand>
</feature>
<feature type="binding site" evidence="2">
    <location>
        <position position="234"/>
    </location>
    <ligand>
        <name>urate</name>
        <dbReference type="ChEBI" id="CHEBI:17775"/>
    </ligand>
</feature>
<feature type="binding site" evidence="2">
    <location>
        <position position="235"/>
    </location>
    <ligand>
        <name>urate</name>
        <dbReference type="ChEBI" id="CHEBI:17775"/>
    </ligand>
</feature>
<feature type="binding site" evidence="2">
    <location>
        <position position="261"/>
    </location>
    <ligand>
        <name>urate</name>
        <dbReference type="ChEBI" id="CHEBI:17775"/>
    </ligand>
</feature>
<sequence>MSTTLSSSTYGKDNVKFLKVKKDPQNPKKQEVMEATVTCLLEGGFDTSYTEADNSSIVPTDTVKNTILVLAKTTEIWPIERFAAKLATHFVEKYSHVSGVSVKIVQDRWVKYAVDGKPHDHSFIHEGGEKRITDLYYKRSGDYKLSSAIKDLTVLKSTGSMFYGYNKCDFTTLQPTTDRILSTDVDATWVWDNKKIGSVYDIAKAADKGIFDNVYNQAREITLTTFALENSPSVQATMFNMATQILEKACSVYSVSYALPNKHYFLIDLKWKGLENDNELFYPSPHPNGLIKCTVVRKEKTKL</sequence>
<comment type="function">
    <text>Catalyzes the oxidation of uric acid to 5-hydroxyisourate, which is further processed to form (S)-allantoin.</text>
</comment>
<comment type="catalytic activity">
    <reaction>
        <text>urate + O2 + H2O = 5-hydroxyisourate + H2O2</text>
        <dbReference type="Rhea" id="RHEA:21368"/>
        <dbReference type="ChEBI" id="CHEBI:15377"/>
        <dbReference type="ChEBI" id="CHEBI:15379"/>
        <dbReference type="ChEBI" id="CHEBI:16240"/>
        <dbReference type="ChEBI" id="CHEBI:17775"/>
        <dbReference type="ChEBI" id="CHEBI:18072"/>
        <dbReference type="EC" id="1.7.3.3"/>
    </reaction>
</comment>
<comment type="pathway">
    <text>Purine metabolism; urate degradation; (S)-allantoin from urate: step 1/3.</text>
</comment>
<comment type="subcellular location">
    <subcellularLocation>
        <location>Peroxisome</location>
    </subcellularLocation>
</comment>
<comment type="similarity">
    <text evidence="4">Belongs to the uricase family.</text>
</comment>
<keyword id="KW-0560">Oxidoreductase</keyword>
<keyword id="KW-0576">Peroxisome</keyword>
<keyword id="KW-0659">Purine metabolism</keyword>
<protein>
    <recommendedName>
        <fullName>Uricase</fullName>
        <ecNumber>1.7.3.3</ecNumber>
    </recommendedName>
    <alternativeName>
        <fullName>Urate oxidase</fullName>
    </alternativeName>
</protein>
<evidence type="ECO:0000250" key="1">
    <source>
        <dbReference type="UniProtKB" id="D0VWQ1"/>
    </source>
</evidence>
<evidence type="ECO:0000250" key="2">
    <source>
        <dbReference type="UniProtKB" id="Q00511"/>
    </source>
</evidence>
<evidence type="ECO:0000255" key="3"/>
<evidence type="ECO:0000305" key="4"/>
<dbReference type="EC" id="1.7.3.3"/>
<dbReference type="EMBL" id="D32043">
    <property type="protein sequence ID" value="BAA06804.1"/>
    <property type="molecule type" value="Genomic_DNA"/>
</dbReference>
<dbReference type="PIR" id="JC5140">
    <property type="entry name" value="JC5140"/>
</dbReference>
<dbReference type="SMR" id="P78609"/>
<dbReference type="BRENDA" id="1.7.3.3">
    <property type="organism ID" value="1148"/>
</dbReference>
<dbReference type="UniPathway" id="UPA00394">
    <property type="reaction ID" value="UER00650"/>
</dbReference>
<dbReference type="GO" id="GO:0005777">
    <property type="term" value="C:peroxisome"/>
    <property type="evidence" value="ECO:0007669"/>
    <property type="project" value="UniProtKB-SubCell"/>
</dbReference>
<dbReference type="GO" id="GO:0004846">
    <property type="term" value="F:urate oxidase activity"/>
    <property type="evidence" value="ECO:0007669"/>
    <property type="project" value="UniProtKB-EC"/>
</dbReference>
<dbReference type="GO" id="GO:0006145">
    <property type="term" value="P:purine nucleobase catabolic process"/>
    <property type="evidence" value="ECO:0007669"/>
    <property type="project" value="TreeGrafter"/>
</dbReference>
<dbReference type="GO" id="GO:0019628">
    <property type="term" value="P:urate catabolic process"/>
    <property type="evidence" value="ECO:0007669"/>
    <property type="project" value="UniProtKB-UniPathway"/>
</dbReference>
<dbReference type="CDD" id="cd00445">
    <property type="entry name" value="Uricase"/>
    <property type="match status" value="1"/>
</dbReference>
<dbReference type="FunFam" id="3.10.270.10:FF:000001">
    <property type="entry name" value="Uricase"/>
    <property type="match status" value="1"/>
</dbReference>
<dbReference type="Gene3D" id="3.10.270.10">
    <property type="entry name" value="Urate Oxidase"/>
    <property type="match status" value="1"/>
</dbReference>
<dbReference type="InterPro" id="IPR002042">
    <property type="entry name" value="Uricase"/>
</dbReference>
<dbReference type="InterPro" id="IPR019842">
    <property type="entry name" value="Uricase_CS"/>
</dbReference>
<dbReference type="NCBIfam" id="TIGR03383">
    <property type="entry name" value="urate_oxi"/>
    <property type="match status" value="1"/>
</dbReference>
<dbReference type="PANTHER" id="PTHR42874">
    <property type="entry name" value="URICASE"/>
    <property type="match status" value="1"/>
</dbReference>
<dbReference type="PANTHER" id="PTHR42874:SF1">
    <property type="entry name" value="URICASE"/>
    <property type="match status" value="1"/>
</dbReference>
<dbReference type="Pfam" id="PF01014">
    <property type="entry name" value="Uricase"/>
    <property type="match status" value="2"/>
</dbReference>
<dbReference type="PIRSF" id="PIRSF000241">
    <property type="entry name" value="Urate_oxidase"/>
    <property type="match status" value="1"/>
</dbReference>
<dbReference type="PRINTS" id="PR00093">
    <property type="entry name" value="URICASE"/>
</dbReference>
<dbReference type="SUPFAM" id="SSF55620">
    <property type="entry name" value="Tetrahydrobiopterin biosynthesis enzymes-like"/>
    <property type="match status" value="2"/>
</dbReference>
<dbReference type="PROSITE" id="PS00366">
    <property type="entry name" value="URICASE"/>
    <property type="match status" value="1"/>
</dbReference>
<organism>
    <name type="scientific">Cyberlindnera jadinii</name>
    <name type="common">Torula yeast</name>
    <name type="synonym">Pichia jadinii</name>
    <dbReference type="NCBI Taxonomy" id="4903"/>
    <lineage>
        <taxon>Eukaryota</taxon>
        <taxon>Fungi</taxon>
        <taxon>Dikarya</taxon>
        <taxon>Ascomycota</taxon>
        <taxon>Saccharomycotina</taxon>
        <taxon>Saccharomycetes</taxon>
        <taxon>Phaffomycetales</taxon>
        <taxon>Phaffomycetaceae</taxon>
        <taxon>Cyberlindnera</taxon>
    </lineage>
</organism>
<name>URIC_CYBJA</name>
<accession>P78609</accession>
<reference key="1">
    <citation type="journal article" date="1996" name="J. Biochem.">
        <title>Cloning, sequence analysis, and expression in Escherichia coli of the gene encoding the Candida utilis urate oxidase (uricase).</title>
        <authorList>
            <person name="Koyama Y."/>
            <person name="Ichikawa T."/>
            <person name="Nakano E."/>
        </authorList>
    </citation>
    <scope>NUCLEOTIDE SEQUENCE [GENOMIC DNA]</scope>
    <source>
        <strain>ATCC 9950 / CBS 5609 / DSM 2361 / NBRC 0998 / NRRL Y-900</strain>
    </source>
</reference>
<proteinExistence type="inferred from homology"/>